<sequence>MKISEEEVRHVAKLSKLSFSESETTAFATTLSKIVDMVELLNEVDTEGVAITTTMADKKNVMRQDVAEEGTDRALLFKNVPEKENHFIKVPAILYDGGDA</sequence>
<proteinExistence type="inferred from homology"/>
<evidence type="ECO:0000255" key="1">
    <source>
        <dbReference type="HAMAP-Rule" id="MF_00122"/>
    </source>
</evidence>
<reference key="1">
    <citation type="journal article" date="2002" name="Proc. Natl. Acad. Sci. U.S.A.">
        <title>Genome sequence and comparative microarray analysis of serotype M18 group A Streptococcus strains associated with acute rheumatic fever outbreaks.</title>
        <authorList>
            <person name="Smoot J.C."/>
            <person name="Barbian K.D."/>
            <person name="Van Gompel J.J."/>
            <person name="Smoot L.M."/>
            <person name="Chaussee M.S."/>
            <person name="Sylva G.L."/>
            <person name="Sturdevant D.E."/>
            <person name="Ricklefs S.M."/>
            <person name="Porcella S.F."/>
            <person name="Parkins L.D."/>
            <person name="Beres S.B."/>
            <person name="Campbell D.S."/>
            <person name="Smith T.M."/>
            <person name="Zhang Q."/>
            <person name="Kapur V."/>
            <person name="Daly J.A."/>
            <person name="Veasy L.G."/>
            <person name="Musser J.M."/>
        </authorList>
    </citation>
    <scope>NUCLEOTIDE SEQUENCE [LARGE SCALE GENOMIC DNA]</scope>
    <source>
        <strain>MGAS8232</strain>
    </source>
</reference>
<accession>Q8NZL9</accession>
<comment type="function">
    <text evidence="1">Allows the formation of correctly charged Asn-tRNA(Asn) or Gln-tRNA(Gln) through the transamidation of misacylated Asp-tRNA(Asn) or Glu-tRNA(Gln) in organisms which lack either or both of asparaginyl-tRNA or glutaminyl-tRNA synthetases. The reaction takes place in the presence of glutamine and ATP through an activated phospho-Asp-tRNA(Asn) or phospho-Glu-tRNA(Gln).</text>
</comment>
<comment type="catalytic activity">
    <reaction evidence="1">
        <text>L-glutamyl-tRNA(Gln) + L-glutamine + ATP + H2O = L-glutaminyl-tRNA(Gln) + L-glutamate + ADP + phosphate + H(+)</text>
        <dbReference type="Rhea" id="RHEA:17521"/>
        <dbReference type="Rhea" id="RHEA-COMP:9681"/>
        <dbReference type="Rhea" id="RHEA-COMP:9684"/>
        <dbReference type="ChEBI" id="CHEBI:15377"/>
        <dbReference type="ChEBI" id="CHEBI:15378"/>
        <dbReference type="ChEBI" id="CHEBI:29985"/>
        <dbReference type="ChEBI" id="CHEBI:30616"/>
        <dbReference type="ChEBI" id="CHEBI:43474"/>
        <dbReference type="ChEBI" id="CHEBI:58359"/>
        <dbReference type="ChEBI" id="CHEBI:78520"/>
        <dbReference type="ChEBI" id="CHEBI:78521"/>
        <dbReference type="ChEBI" id="CHEBI:456216"/>
    </reaction>
</comment>
<comment type="catalytic activity">
    <reaction evidence="1">
        <text>L-aspartyl-tRNA(Asn) + L-glutamine + ATP + H2O = L-asparaginyl-tRNA(Asn) + L-glutamate + ADP + phosphate + 2 H(+)</text>
        <dbReference type="Rhea" id="RHEA:14513"/>
        <dbReference type="Rhea" id="RHEA-COMP:9674"/>
        <dbReference type="Rhea" id="RHEA-COMP:9677"/>
        <dbReference type="ChEBI" id="CHEBI:15377"/>
        <dbReference type="ChEBI" id="CHEBI:15378"/>
        <dbReference type="ChEBI" id="CHEBI:29985"/>
        <dbReference type="ChEBI" id="CHEBI:30616"/>
        <dbReference type="ChEBI" id="CHEBI:43474"/>
        <dbReference type="ChEBI" id="CHEBI:58359"/>
        <dbReference type="ChEBI" id="CHEBI:78515"/>
        <dbReference type="ChEBI" id="CHEBI:78516"/>
        <dbReference type="ChEBI" id="CHEBI:456216"/>
    </reaction>
</comment>
<comment type="subunit">
    <text evidence="1">Heterotrimer of A, B and C subunits.</text>
</comment>
<comment type="similarity">
    <text evidence="1">Belongs to the GatC family.</text>
</comment>
<dbReference type="EC" id="6.3.5.-" evidence="1"/>
<dbReference type="EMBL" id="AE009949">
    <property type="protein sequence ID" value="AAL98359.1"/>
    <property type="molecule type" value="Genomic_DNA"/>
</dbReference>
<dbReference type="RefSeq" id="WP_011018164.1">
    <property type="nucleotide sequence ID" value="NC_003485.1"/>
</dbReference>
<dbReference type="SMR" id="Q8NZL9"/>
<dbReference type="KEGG" id="spm:spyM18_1841"/>
<dbReference type="HOGENOM" id="CLU_105899_1_2_9"/>
<dbReference type="GO" id="GO:0050566">
    <property type="term" value="F:asparaginyl-tRNA synthase (glutamine-hydrolyzing) activity"/>
    <property type="evidence" value="ECO:0007669"/>
    <property type="project" value="RHEA"/>
</dbReference>
<dbReference type="GO" id="GO:0005524">
    <property type="term" value="F:ATP binding"/>
    <property type="evidence" value="ECO:0007669"/>
    <property type="project" value="UniProtKB-KW"/>
</dbReference>
<dbReference type="GO" id="GO:0050567">
    <property type="term" value="F:glutaminyl-tRNA synthase (glutamine-hydrolyzing) activity"/>
    <property type="evidence" value="ECO:0007669"/>
    <property type="project" value="UniProtKB-UniRule"/>
</dbReference>
<dbReference type="GO" id="GO:0070681">
    <property type="term" value="P:glutaminyl-tRNAGln biosynthesis via transamidation"/>
    <property type="evidence" value="ECO:0007669"/>
    <property type="project" value="TreeGrafter"/>
</dbReference>
<dbReference type="GO" id="GO:0006450">
    <property type="term" value="P:regulation of translational fidelity"/>
    <property type="evidence" value="ECO:0007669"/>
    <property type="project" value="InterPro"/>
</dbReference>
<dbReference type="GO" id="GO:0006412">
    <property type="term" value="P:translation"/>
    <property type="evidence" value="ECO:0007669"/>
    <property type="project" value="UniProtKB-UniRule"/>
</dbReference>
<dbReference type="Gene3D" id="1.10.20.60">
    <property type="entry name" value="Glu-tRNAGln amidotransferase C subunit, N-terminal domain"/>
    <property type="match status" value="1"/>
</dbReference>
<dbReference type="HAMAP" id="MF_00122">
    <property type="entry name" value="GatC"/>
    <property type="match status" value="1"/>
</dbReference>
<dbReference type="InterPro" id="IPR036113">
    <property type="entry name" value="Asp/Glu-ADT_sf_sub_c"/>
</dbReference>
<dbReference type="InterPro" id="IPR003837">
    <property type="entry name" value="GatC"/>
</dbReference>
<dbReference type="NCBIfam" id="TIGR00135">
    <property type="entry name" value="gatC"/>
    <property type="match status" value="1"/>
</dbReference>
<dbReference type="PANTHER" id="PTHR15004">
    <property type="entry name" value="GLUTAMYL-TRNA(GLN) AMIDOTRANSFERASE SUBUNIT C, MITOCHONDRIAL"/>
    <property type="match status" value="1"/>
</dbReference>
<dbReference type="PANTHER" id="PTHR15004:SF0">
    <property type="entry name" value="GLUTAMYL-TRNA(GLN) AMIDOTRANSFERASE SUBUNIT C, MITOCHONDRIAL"/>
    <property type="match status" value="1"/>
</dbReference>
<dbReference type="Pfam" id="PF02686">
    <property type="entry name" value="GatC"/>
    <property type="match status" value="1"/>
</dbReference>
<dbReference type="SUPFAM" id="SSF141000">
    <property type="entry name" value="Glu-tRNAGln amidotransferase C subunit"/>
    <property type="match status" value="1"/>
</dbReference>
<keyword id="KW-0067">ATP-binding</keyword>
<keyword id="KW-0436">Ligase</keyword>
<keyword id="KW-0547">Nucleotide-binding</keyword>
<keyword id="KW-0648">Protein biosynthesis</keyword>
<protein>
    <recommendedName>
        <fullName evidence="1">Aspartyl/glutamyl-tRNA(Asn/Gln) amidotransferase subunit C</fullName>
        <shortName evidence="1">Asp/Glu-ADT subunit C</shortName>
        <ecNumber evidence="1">6.3.5.-</ecNumber>
    </recommendedName>
</protein>
<name>GATC_STRP8</name>
<gene>
    <name evidence="1" type="primary">gatC</name>
    <name type="ordered locus">spyM18_1841</name>
</gene>
<organism>
    <name type="scientific">Streptococcus pyogenes serotype M18 (strain MGAS8232)</name>
    <dbReference type="NCBI Taxonomy" id="186103"/>
    <lineage>
        <taxon>Bacteria</taxon>
        <taxon>Bacillati</taxon>
        <taxon>Bacillota</taxon>
        <taxon>Bacilli</taxon>
        <taxon>Lactobacillales</taxon>
        <taxon>Streptococcaceae</taxon>
        <taxon>Streptococcus</taxon>
    </lineage>
</organism>
<feature type="chain" id="PRO_0000105348" description="Aspartyl/glutamyl-tRNA(Asn/Gln) amidotransferase subunit C">
    <location>
        <begin position="1"/>
        <end position="100"/>
    </location>
</feature>